<comment type="function">
    <text evidence="1">The glycine cleavage system catalyzes the degradation of glycine. The P protein binds the alpha-amino group of glycine through its pyridoxal phosphate cofactor; CO(2) is released and the remaining methylamine moiety is then transferred to the lipoamide cofactor of the H protein.</text>
</comment>
<comment type="catalytic activity">
    <reaction evidence="1">
        <text>N(6)-[(R)-lipoyl]-L-lysyl-[glycine-cleavage complex H protein] + glycine + H(+) = N(6)-[(R)-S(8)-aminomethyldihydrolipoyl]-L-lysyl-[glycine-cleavage complex H protein] + CO2</text>
        <dbReference type="Rhea" id="RHEA:24304"/>
        <dbReference type="Rhea" id="RHEA-COMP:10494"/>
        <dbReference type="Rhea" id="RHEA-COMP:10495"/>
        <dbReference type="ChEBI" id="CHEBI:15378"/>
        <dbReference type="ChEBI" id="CHEBI:16526"/>
        <dbReference type="ChEBI" id="CHEBI:57305"/>
        <dbReference type="ChEBI" id="CHEBI:83099"/>
        <dbReference type="ChEBI" id="CHEBI:83143"/>
        <dbReference type="EC" id="1.4.4.2"/>
    </reaction>
</comment>
<comment type="subunit">
    <text evidence="1">The glycine cleavage system is composed of four proteins: P, T, L and H. In this organism, the P 'protein' is a heterodimer of two subunits.</text>
</comment>
<comment type="similarity">
    <text evidence="1">Belongs to the GcvP family. N-terminal subunit subfamily.</text>
</comment>
<organism>
    <name type="scientific">Legionella pneumophila (strain Corby)</name>
    <dbReference type="NCBI Taxonomy" id="400673"/>
    <lineage>
        <taxon>Bacteria</taxon>
        <taxon>Pseudomonadati</taxon>
        <taxon>Pseudomonadota</taxon>
        <taxon>Gammaproteobacteria</taxon>
        <taxon>Legionellales</taxon>
        <taxon>Legionellaceae</taxon>
        <taxon>Legionella</taxon>
    </lineage>
</organism>
<protein>
    <recommendedName>
        <fullName evidence="1">Probable glycine dehydrogenase (decarboxylating) subunit 1</fullName>
        <ecNumber evidence="1">1.4.4.2</ecNumber>
    </recommendedName>
    <alternativeName>
        <fullName evidence="1">Glycine cleavage system P-protein subunit 1</fullName>
    </alternativeName>
    <alternativeName>
        <fullName evidence="1">Glycine decarboxylase subunit 1</fullName>
    </alternativeName>
    <alternativeName>
        <fullName evidence="1">Glycine dehydrogenase (aminomethyl-transferring) subunit 1</fullName>
    </alternativeName>
</protein>
<reference key="1">
    <citation type="submission" date="2006-11" db="EMBL/GenBank/DDBJ databases">
        <title>Identification and characterization of a new conjugation/ type IVA secretion system (trb/tra) of L. pneumophila Corby localized on a mobile genomic island.</title>
        <authorList>
            <person name="Gloeckner G."/>
            <person name="Albert-Weissenberger C."/>
            <person name="Weinmann E."/>
            <person name="Jacobi S."/>
            <person name="Schunder E."/>
            <person name="Steinert M."/>
            <person name="Buchrieser C."/>
            <person name="Hacker J."/>
            <person name="Heuner K."/>
        </authorList>
    </citation>
    <scope>NUCLEOTIDE SEQUENCE [LARGE SCALE GENOMIC DNA]</scope>
    <source>
        <strain>Corby</strain>
    </source>
</reference>
<sequence>MPYIPHTPNDTKEMLEAIGAQDIQDLFDEIPASLQYAGFQNIPAGINEMEMLKEAQNQAQKNRNGICFIGAGCYEHHIPAAVWDIASRGEFLTAYTPYQAEASQGTLQLLYEYQTMICELTGMEVSNASMYDGATALAEAVLMAVRLNKHSKTNRVLIAGTVHPFYRETIETIVRNQHIEVITLPFDEQQGITDLGSLNQYTGEDITALVIAQPNFFGCLEQVDKMTSWAHHNKTISVACVNPTSLALLKPPGSWGEHGVDIVCGEGQPLGSPMASGGPYFGFLSTRMAHVRQMPGRIIGRTVDKDGKTGFSLTLQAREQHIRRAKATSNICTNQGLLVTAATIYMSLLGPEGLSQVATQCHQNTHELITALTQIEGVELAFKAPFFHEALIKLNQPVQYVLQQLADAGIAGGYAPEQHYPQLANTLLVCATEVRTAEDIAKYAKTLKTIMSKRGA</sequence>
<dbReference type="EC" id="1.4.4.2" evidence="1"/>
<dbReference type="EMBL" id="CP000675">
    <property type="protein sequence ID" value="ABQ54135.1"/>
    <property type="molecule type" value="Genomic_DNA"/>
</dbReference>
<dbReference type="RefSeq" id="WP_011945315.1">
    <property type="nucleotide sequence ID" value="NZ_JAPMSS010000003.1"/>
</dbReference>
<dbReference type="SMR" id="A5I9T5"/>
<dbReference type="KEGG" id="lpc:LPC_0136"/>
<dbReference type="HOGENOM" id="CLU_004620_0_2_6"/>
<dbReference type="GO" id="GO:0004375">
    <property type="term" value="F:glycine dehydrogenase (decarboxylating) activity"/>
    <property type="evidence" value="ECO:0007669"/>
    <property type="project" value="UniProtKB-EC"/>
</dbReference>
<dbReference type="GO" id="GO:0019464">
    <property type="term" value="P:glycine decarboxylation via glycine cleavage system"/>
    <property type="evidence" value="ECO:0007669"/>
    <property type="project" value="UniProtKB-UniRule"/>
</dbReference>
<dbReference type="GO" id="GO:0009116">
    <property type="term" value="P:nucleoside metabolic process"/>
    <property type="evidence" value="ECO:0007669"/>
    <property type="project" value="InterPro"/>
</dbReference>
<dbReference type="CDD" id="cd00613">
    <property type="entry name" value="GDC-P"/>
    <property type="match status" value="1"/>
</dbReference>
<dbReference type="Gene3D" id="3.90.1150.10">
    <property type="entry name" value="Aspartate Aminotransferase, domain 1"/>
    <property type="match status" value="1"/>
</dbReference>
<dbReference type="Gene3D" id="3.40.640.10">
    <property type="entry name" value="Type I PLP-dependent aspartate aminotransferase-like (Major domain)"/>
    <property type="match status" value="1"/>
</dbReference>
<dbReference type="HAMAP" id="MF_00712">
    <property type="entry name" value="GcvPA"/>
    <property type="match status" value="1"/>
</dbReference>
<dbReference type="InterPro" id="IPR023010">
    <property type="entry name" value="GcvPA"/>
</dbReference>
<dbReference type="InterPro" id="IPR049315">
    <property type="entry name" value="GDC-P_N"/>
</dbReference>
<dbReference type="InterPro" id="IPR020581">
    <property type="entry name" value="GDC_P"/>
</dbReference>
<dbReference type="InterPro" id="IPR015424">
    <property type="entry name" value="PyrdxlP-dep_Trfase"/>
</dbReference>
<dbReference type="InterPro" id="IPR015421">
    <property type="entry name" value="PyrdxlP-dep_Trfase_major"/>
</dbReference>
<dbReference type="InterPro" id="IPR015422">
    <property type="entry name" value="PyrdxlP-dep_Trfase_small"/>
</dbReference>
<dbReference type="NCBIfam" id="NF001696">
    <property type="entry name" value="PRK00451.1"/>
    <property type="match status" value="1"/>
</dbReference>
<dbReference type="PANTHER" id="PTHR42806">
    <property type="entry name" value="GLYCINE CLEAVAGE SYSTEM P-PROTEIN"/>
    <property type="match status" value="1"/>
</dbReference>
<dbReference type="PANTHER" id="PTHR42806:SF1">
    <property type="entry name" value="GLYCINE DEHYDROGENASE (DECARBOXYLATING)"/>
    <property type="match status" value="1"/>
</dbReference>
<dbReference type="Pfam" id="PF02347">
    <property type="entry name" value="GDC-P"/>
    <property type="match status" value="1"/>
</dbReference>
<dbReference type="PIRSF" id="PIRSF006815">
    <property type="entry name" value="GcvPA"/>
    <property type="match status" value="1"/>
</dbReference>
<dbReference type="SUPFAM" id="SSF53383">
    <property type="entry name" value="PLP-dependent transferases"/>
    <property type="match status" value="1"/>
</dbReference>
<keyword id="KW-0560">Oxidoreductase</keyword>
<evidence type="ECO:0000255" key="1">
    <source>
        <dbReference type="HAMAP-Rule" id="MF_00712"/>
    </source>
</evidence>
<proteinExistence type="inferred from homology"/>
<gene>
    <name evidence="1" type="primary">gcvPA</name>
    <name type="ordered locus">LPC_0136</name>
</gene>
<name>GCSPA_LEGPC</name>
<accession>A5I9T5</accession>
<feature type="chain" id="PRO_1000045661" description="Probable glycine dehydrogenase (decarboxylating) subunit 1">
    <location>
        <begin position="1"/>
        <end position="456"/>
    </location>
</feature>